<protein>
    <recommendedName>
        <fullName evidence="1">ATP-dependent Clp protease ATP-binding subunit ClpX</fullName>
    </recommendedName>
</protein>
<gene>
    <name evidence="1" type="primary">clpX</name>
    <name type="ordered locus">BQ05050</name>
</gene>
<feature type="chain" id="PRO_0000160316" description="ATP-dependent Clp protease ATP-binding subunit ClpX">
    <location>
        <begin position="1"/>
        <end position="424"/>
    </location>
</feature>
<feature type="domain" description="ClpX-type ZB" evidence="2">
    <location>
        <begin position="5"/>
        <end position="58"/>
    </location>
</feature>
<feature type="binding site" evidence="2">
    <location>
        <position position="17"/>
    </location>
    <ligand>
        <name>Zn(2+)</name>
        <dbReference type="ChEBI" id="CHEBI:29105"/>
    </ligand>
</feature>
<feature type="binding site" evidence="2">
    <location>
        <position position="20"/>
    </location>
    <ligand>
        <name>Zn(2+)</name>
        <dbReference type="ChEBI" id="CHEBI:29105"/>
    </ligand>
</feature>
<feature type="binding site" evidence="2">
    <location>
        <position position="39"/>
    </location>
    <ligand>
        <name>Zn(2+)</name>
        <dbReference type="ChEBI" id="CHEBI:29105"/>
    </ligand>
</feature>
<feature type="binding site" evidence="2">
    <location>
        <position position="42"/>
    </location>
    <ligand>
        <name>Zn(2+)</name>
        <dbReference type="ChEBI" id="CHEBI:29105"/>
    </ligand>
</feature>
<feature type="binding site" evidence="1">
    <location>
        <begin position="121"/>
        <end position="128"/>
    </location>
    <ligand>
        <name>ATP</name>
        <dbReference type="ChEBI" id="CHEBI:30616"/>
    </ligand>
</feature>
<accession>Q6G177</accession>
<evidence type="ECO:0000255" key="1">
    <source>
        <dbReference type="HAMAP-Rule" id="MF_00175"/>
    </source>
</evidence>
<evidence type="ECO:0000255" key="2">
    <source>
        <dbReference type="PROSITE-ProRule" id="PRU01250"/>
    </source>
</evidence>
<sequence>MSKIGNSGSESKNTLYCSFCGKSQHEVRKLIAGPTVFICDECVELCMDIIREENKSSGIKARDGVPTPQEIITVLDDYVIGQQHAKRVLSVAVHNHYKRLAHQSKSNDIELAKSNILLVGPTGCGKTYLAQTLARIIDVPFTMADATTLTEAGYVGEDVENIILKLLQAADYNVERAQRGIVYIDEVDKISRKADNPSITRDVSGEGVQQALLKIMEGTIASVPPQGGRKHPQQEFLQVNTTNILFICGGAFAGLERIISGRGEKTSIGFSATVKAPDERCVGEIFRDLEPEDLIKFGLIPEFIGRLPIVATLEDLDVNALVQILSQPKNALVKQYQRLFEMENVELAFHEDALRVIAKKAIERKTGARGLRSIMEKILLETMFELPTLEGVQKVVISSDVVDGKARPLYIYSERVEDKENVSA</sequence>
<comment type="function">
    <text evidence="1">ATP-dependent specificity component of the Clp protease. It directs the protease to specific substrates. Can perform chaperone functions in the absence of ClpP.</text>
</comment>
<comment type="subunit">
    <text evidence="1">Component of the ClpX-ClpP complex. Forms a hexameric ring that, in the presence of ATP, binds to fourteen ClpP subunits assembled into a disk-like structure with a central cavity, resembling the structure of eukaryotic proteasomes.</text>
</comment>
<comment type="similarity">
    <text evidence="1">Belongs to the ClpX chaperone family.</text>
</comment>
<reference key="1">
    <citation type="journal article" date="2004" name="Proc. Natl. Acad. Sci. U.S.A.">
        <title>The louse-borne human pathogen Bartonella quintana is a genomic derivative of the zoonotic agent Bartonella henselae.</title>
        <authorList>
            <person name="Alsmark U.C.M."/>
            <person name="Frank A.C."/>
            <person name="Karlberg E.O."/>
            <person name="Legault B.-A."/>
            <person name="Ardell D.H."/>
            <person name="Canbaeck B."/>
            <person name="Eriksson A.-S."/>
            <person name="Naeslund A.K."/>
            <person name="Handley S.A."/>
            <person name="Huvet M."/>
            <person name="La Scola B."/>
            <person name="Holmberg M."/>
            <person name="Andersson S.G.E."/>
        </authorList>
    </citation>
    <scope>NUCLEOTIDE SEQUENCE [LARGE SCALE GENOMIC DNA]</scope>
    <source>
        <strain>Toulouse</strain>
    </source>
</reference>
<dbReference type="EMBL" id="BX897700">
    <property type="protein sequence ID" value="CAF26004.1"/>
    <property type="molecule type" value="Genomic_DNA"/>
</dbReference>
<dbReference type="RefSeq" id="WP_011179289.1">
    <property type="nucleotide sequence ID" value="NC_005955.1"/>
</dbReference>
<dbReference type="SMR" id="Q6G177"/>
<dbReference type="GeneID" id="56533127"/>
<dbReference type="KEGG" id="bqu:BQ05050"/>
<dbReference type="eggNOG" id="COG1219">
    <property type="taxonomic scope" value="Bacteria"/>
</dbReference>
<dbReference type="HOGENOM" id="CLU_014218_8_2_5"/>
<dbReference type="OrthoDB" id="9804062at2"/>
<dbReference type="Proteomes" id="UP000000597">
    <property type="component" value="Chromosome"/>
</dbReference>
<dbReference type="GO" id="GO:0009376">
    <property type="term" value="C:HslUV protease complex"/>
    <property type="evidence" value="ECO:0007669"/>
    <property type="project" value="TreeGrafter"/>
</dbReference>
<dbReference type="GO" id="GO:0005524">
    <property type="term" value="F:ATP binding"/>
    <property type="evidence" value="ECO:0007669"/>
    <property type="project" value="UniProtKB-UniRule"/>
</dbReference>
<dbReference type="GO" id="GO:0016887">
    <property type="term" value="F:ATP hydrolysis activity"/>
    <property type="evidence" value="ECO:0007669"/>
    <property type="project" value="InterPro"/>
</dbReference>
<dbReference type="GO" id="GO:0140662">
    <property type="term" value="F:ATP-dependent protein folding chaperone"/>
    <property type="evidence" value="ECO:0007669"/>
    <property type="project" value="InterPro"/>
</dbReference>
<dbReference type="GO" id="GO:0046983">
    <property type="term" value="F:protein dimerization activity"/>
    <property type="evidence" value="ECO:0007669"/>
    <property type="project" value="InterPro"/>
</dbReference>
<dbReference type="GO" id="GO:0051082">
    <property type="term" value="F:unfolded protein binding"/>
    <property type="evidence" value="ECO:0007669"/>
    <property type="project" value="UniProtKB-UniRule"/>
</dbReference>
<dbReference type="GO" id="GO:0008270">
    <property type="term" value="F:zinc ion binding"/>
    <property type="evidence" value="ECO:0007669"/>
    <property type="project" value="InterPro"/>
</dbReference>
<dbReference type="GO" id="GO:0051301">
    <property type="term" value="P:cell division"/>
    <property type="evidence" value="ECO:0007669"/>
    <property type="project" value="TreeGrafter"/>
</dbReference>
<dbReference type="GO" id="GO:0051603">
    <property type="term" value="P:proteolysis involved in protein catabolic process"/>
    <property type="evidence" value="ECO:0007669"/>
    <property type="project" value="TreeGrafter"/>
</dbReference>
<dbReference type="CDD" id="cd19497">
    <property type="entry name" value="RecA-like_ClpX"/>
    <property type="match status" value="1"/>
</dbReference>
<dbReference type="FunFam" id="1.10.8.60:FF:000002">
    <property type="entry name" value="ATP-dependent Clp protease ATP-binding subunit ClpX"/>
    <property type="match status" value="1"/>
</dbReference>
<dbReference type="FunFam" id="3.40.50.300:FF:000005">
    <property type="entry name" value="ATP-dependent Clp protease ATP-binding subunit ClpX"/>
    <property type="match status" value="1"/>
</dbReference>
<dbReference type="Gene3D" id="1.10.8.60">
    <property type="match status" value="1"/>
</dbReference>
<dbReference type="Gene3D" id="6.20.220.10">
    <property type="entry name" value="ClpX chaperone, C4-type zinc finger domain"/>
    <property type="match status" value="1"/>
</dbReference>
<dbReference type="Gene3D" id="3.40.50.300">
    <property type="entry name" value="P-loop containing nucleotide triphosphate hydrolases"/>
    <property type="match status" value="1"/>
</dbReference>
<dbReference type="HAMAP" id="MF_00175">
    <property type="entry name" value="ClpX"/>
    <property type="match status" value="1"/>
</dbReference>
<dbReference type="InterPro" id="IPR003593">
    <property type="entry name" value="AAA+_ATPase"/>
</dbReference>
<dbReference type="InterPro" id="IPR050052">
    <property type="entry name" value="ATP-dep_Clp_protease_ClpX"/>
</dbReference>
<dbReference type="InterPro" id="IPR003959">
    <property type="entry name" value="ATPase_AAA_core"/>
</dbReference>
<dbReference type="InterPro" id="IPR019489">
    <property type="entry name" value="Clp_ATPase_C"/>
</dbReference>
<dbReference type="InterPro" id="IPR004487">
    <property type="entry name" value="Clp_protease_ATP-bd_su_ClpX"/>
</dbReference>
<dbReference type="InterPro" id="IPR046425">
    <property type="entry name" value="ClpX_bact"/>
</dbReference>
<dbReference type="InterPro" id="IPR027417">
    <property type="entry name" value="P-loop_NTPase"/>
</dbReference>
<dbReference type="InterPro" id="IPR010603">
    <property type="entry name" value="Znf_CppX_C4"/>
</dbReference>
<dbReference type="InterPro" id="IPR038366">
    <property type="entry name" value="Znf_CppX_C4_sf"/>
</dbReference>
<dbReference type="NCBIfam" id="TIGR00382">
    <property type="entry name" value="clpX"/>
    <property type="match status" value="1"/>
</dbReference>
<dbReference type="NCBIfam" id="NF003745">
    <property type="entry name" value="PRK05342.1"/>
    <property type="match status" value="1"/>
</dbReference>
<dbReference type="PANTHER" id="PTHR48102:SF7">
    <property type="entry name" value="ATP-DEPENDENT CLP PROTEASE ATP-BINDING SUBUNIT CLPX-LIKE, MITOCHONDRIAL"/>
    <property type="match status" value="1"/>
</dbReference>
<dbReference type="PANTHER" id="PTHR48102">
    <property type="entry name" value="ATP-DEPENDENT CLP PROTEASE ATP-BINDING SUBUNIT CLPX-LIKE, MITOCHONDRIAL-RELATED"/>
    <property type="match status" value="1"/>
</dbReference>
<dbReference type="Pfam" id="PF07724">
    <property type="entry name" value="AAA_2"/>
    <property type="match status" value="1"/>
</dbReference>
<dbReference type="Pfam" id="PF10431">
    <property type="entry name" value="ClpB_D2-small"/>
    <property type="match status" value="1"/>
</dbReference>
<dbReference type="Pfam" id="PF06689">
    <property type="entry name" value="zf-C4_ClpX"/>
    <property type="match status" value="1"/>
</dbReference>
<dbReference type="SMART" id="SM00382">
    <property type="entry name" value="AAA"/>
    <property type="match status" value="1"/>
</dbReference>
<dbReference type="SMART" id="SM01086">
    <property type="entry name" value="ClpB_D2-small"/>
    <property type="match status" value="1"/>
</dbReference>
<dbReference type="SMART" id="SM00994">
    <property type="entry name" value="zf-C4_ClpX"/>
    <property type="match status" value="1"/>
</dbReference>
<dbReference type="SUPFAM" id="SSF57716">
    <property type="entry name" value="Glucocorticoid receptor-like (DNA-binding domain)"/>
    <property type="match status" value="1"/>
</dbReference>
<dbReference type="SUPFAM" id="SSF52540">
    <property type="entry name" value="P-loop containing nucleoside triphosphate hydrolases"/>
    <property type="match status" value="1"/>
</dbReference>
<dbReference type="PROSITE" id="PS51902">
    <property type="entry name" value="CLPX_ZB"/>
    <property type="match status" value="1"/>
</dbReference>
<keyword id="KW-0067">ATP-binding</keyword>
<keyword id="KW-0143">Chaperone</keyword>
<keyword id="KW-0479">Metal-binding</keyword>
<keyword id="KW-0547">Nucleotide-binding</keyword>
<keyword id="KW-0862">Zinc</keyword>
<name>CLPX_BARQU</name>
<organism>
    <name type="scientific">Bartonella quintana (strain Toulouse)</name>
    <name type="common">Rochalimaea quintana</name>
    <dbReference type="NCBI Taxonomy" id="283165"/>
    <lineage>
        <taxon>Bacteria</taxon>
        <taxon>Pseudomonadati</taxon>
        <taxon>Pseudomonadota</taxon>
        <taxon>Alphaproteobacteria</taxon>
        <taxon>Hyphomicrobiales</taxon>
        <taxon>Bartonellaceae</taxon>
        <taxon>Bartonella</taxon>
    </lineage>
</organism>
<proteinExistence type="inferred from homology"/>